<evidence type="ECO:0000250" key="1"/>
<evidence type="ECO:0000250" key="2">
    <source>
        <dbReference type="UniProtKB" id="Q7WG29"/>
    </source>
</evidence>
<evidence type="ECO:0000305" key="3"/>
<dbReference type="EC" id="3.1.3.-"/>
<dbReference type="EMBL" id="AL445064">
    <property type="protein sequence ID" value="CAC11684.1"/>
    <property type="molecule type" value="Genomic_DNA"/>
</dbReference>
<dbReference type="SMR" id="Q9HKQ2"/>
<dbReference type="STRING" id="273075.gene:9571764"/>
<dbReference type="PaxDb" id="273075-Ta0544"/>
<dbReference type="EnsemblBacteria" id="CAC11684">
    <property type="protein sequence ID" value="CAC11684"/>
    <property type="gene ID" value="CAC11684"/>
</dbReference>
<dbReference type="KEGG" id="tac:Ta0544"/>
<dbReference type="eggNOG" id="arCOG07384">
    <property type="taxonomic scope" value="Archaea"/>
</dbReference>
<dbReference type="HOGENOM" id="CLU_085077_4_1_2"/>
<dbReference type="InParanoid" id="Q9HKQ2"/>
<dbReference type="OrthoDB" id="4991at2157"/>
<dbReference type="Proteomes" id="UP000001024">
    <property type="component" value="Chromosome"/>
</dbReference>
<dbReference type="GO" id="GO:0005737">
    <property type="term" value="C:cytoplasm"/>
    <property type="evidence" value="ECO:0007669"/>
    <property type="project" value="UniProtKB-SubCell"/>
</dbReference>
<dbReference type="GO" id="GO:0034200">
    <property type="term" value="F:D-glycero-beta-D-manno-heptose 1,7-bisphosphate 7-phosphatase activity"/>
    <property type="evidence" value="ECO:0000250"/>
    <property type="project" value="UniProtKB"/>
</dbReference>
<dbReference type="GO" id="GO:0000287">
    <property type="term" value="F:magnesium ion binding"/>
    <property type="evidence" value="ECO:0000250"/>
    <property type="project" value="UniProtKB"/>
</dbReference>
<dbReference type="GO" id="GO:0008270">
    <property type="term" value="F:zinc ion binding"/>
    <property type="evidence" value="ECO:0000250"/>
    <property type="project" value="UniProtKB"/>
</dbReference>
<dbReference type="GO" id="GO:0005975">
    <property type="term" value="P:carbohydrate metabolic process"/>
    <property type="evidence" value="ECO:0007669"/>
    <property type="project" value="InterPro"/>
</dbReference>
<dbReference type="CDD" id="cd07503">
    <property type="entry name" value="HAD_HisB-N"/>
    <property type="match status" value="1"/>
</dbReference>
<dbReference type="Gene3D" id="3.40.50.1000">
    <property type="entry name" value="HAD superfamily/HAD-like"/>
    <property type="match status" value="1"/>
</dbReference>
<dbReference type="InterPro" id="IPR036412">
    <property type="entry name" value="HAD-like_sf"/>
</dbReference>
<dbReference type="InterPro" id="IPR006549">
    <property type="entry name" value="HAD-SF_hydro_IIIA"/>
</dbReference>
<dbReference type="InterPro" id="IPR023214">
    <property type="entry name" value="HAD_sf"/>
</dbReference>
<dbReference type="InterPro" id="IPR004446">
    <property type="entry name" value="Heptose_bisP_phosphatase"/>
</dbReference>
<dbReference type="InterPro" id="IPR006543">
    <property type="entry name" value="Histidinol-phos"/>
</dbReference>
<dbReference type="InterPro" id="IPR013954">
    <property type="entry name" value="PNK3P"/>
</dbReference>
<dbReference type="NCBIfam" id="TIGR01662">
    <property type="entry name" value="HAD-SF-IIIA"/>
    <property type="match status" value="1"/>
</dbReference>
<dbReference type="NCBIfam" id="TIGR01656">
    <property type="entry name" value="Histidinol-ppas"/>
    <property type="match status" value="1"/>
</dbReference>
<dbReference type="PANTHER" id="PTHR42891">
    <property type="entry name" value="D-GLYCERO-BETA-D-MANNO-HEPTOSE-1,7-BISPHOSPHATE 7-PHOSPHATASE"/>
    <property type="match status" value="1"/>
</dbReference>
<dbReference type="PANTHER" id="PTHR42891:SF1">
    <property type="entry name" value="D-GLYCERO-BETA-D-MANNO-HEPTOSE-1,7-BISPHOSPHATE 7-PHOSPHATASE"/>
    <property type="match status" value="1"/>
</dbReference>
<dbReference type="Pfam" id="PF08645">
    <property type="entry name" value="PNK3P"/>
    <property type="match status" value="1"/>
</dbReference>
<dbReference type="PIRSF" id="PIRSF004682">
    <property type="entry name" value="GmhB"/>
    <property type="match status" value="1"/>
</dbReference>
<dbReference type="SUPFAM" id="SSF56784">
    <property type="entry name" value="HAD-like"/>
    <property type="match status" value="1"/>
</dbReference>
<comment type="function">
    <text evidence="1">Converts the D-glycero-D-manno-heptose 1,7-bisphosphate intermediate into D-glycero-D-manno-heptose 1-phosphate by removing the phosphate group at the C-7 position.</text>
</comment>
<comment type="catalytic activity">
    <reaction>
        <text>D-glycero-D-manno-heptose 1,7-bisphosphate + H2O = D-glycero-D-manno-heptose 1-phosphate + phosphate</text>
        <dbReference type="Rhea" id="RHEA:48504"/>
        <dbReference type="ChEBI" id="CHEBI:15377"/>
        <dbReference type="ChEBI" id="CHEBI:43474"/>
        <dbReference type="ChEBI" id="CHEBI:59957"/>
        <dbReference type="ChEBI" id="CHEBI:60002"/>
    </reaction>
</comment>
<comment type="cofactor">
    <cofactor evidence="1">
        <name>Mg(2+)</name>
        <dbReference type="ChEBI" id="CHEBI:18420"/>
    </cofactor>
</comment>
<comment type="cofactor">
    <cofactor evidence="1">
        <name>Zn(2+)</name>
        <dbReference type="ChEBI" id="CHEBI:29105"/>
    </cofactor>
</comment>
<comment type="subunit">
    <text evidence="1">Monomer.</text>
</comment>
<comment type="subcellular location">
    <subcellularLocation>
        <location evidence="1">Cytoplasm</location>
    </subcellularLocation>
</comment>
<comment type="similarity">
    <text evidence="3">Belongs to the GmhB family.</text>
</comment>
<feature type="chain" id="PRO_0000209410" description="Probable D-glycero-D-manno-heptose-1,7-bisphosphate 7-phosphatase">
    <location>
        <begin position="1"/>
        <end position="160"/>
    </location>
</feature>
<feature type="active site" description="Nucleophile" evidence="1">
    <location>
        <position position="21"/>
    </location>
</feature>
<feature type="active site" description="Proton donor" evidence="1">
    <location>
        <position position="23"/>
    </location>
</feature>
<feature type="binding site" evidence="1">
    <location>
        <begin position="21"/>
        <end position="23"/>
    </location>
    <ligand>
        <name>substrate</name>
    </ligand>
</feature>
<feature type="binding site" evidence="2">
    <location>
        <position position="21"/>
    </location>
    <ligand>
        <name>Mg(2+)</name>
        <dbReference type="ChEBI" id="CHEBI:18420"/>
    </ligand>
</feature>
<feature type="binding site" evidence="2">
    <location>
        <position position="23"/>
    </location>
    <ligand>
        <name>Mg(2+)</name>
        <dbReference type="ChEBI" id="CHEBI:18420"/>
    </ligand>
</feature>
<feature type="binding site" evidence="1">
    <location>
        <begin position="29"/>
        <end position="32"/>
    </location>
    <ligand>
        <name>substrate</name>
    </ligand>
</feature>
<feature type="binding site" evidence="1">
    <location>
        <begin position="63"/>
        <end position="66"/>
    </location>
    <ligand>
        <name>substrate</name>
    </ligand>
</feature>
<feature type="binding site" evidence="2">
    <location>
        <position position="102"/>
    </location>
    <ligand>
        <name>Zn(2+)</name>
        <dbReference type="ChEBI" id="CHEBI:29105"/>
    </ligand>
</feature>
<feature type="binding site" evidence="2">
    <location>
        <position position="104"/>
    </location>
    <ligand>
        <name>Zn(2+)</name>
        <dbReference type="ChEBI" id="CHEBI:29105"/>
    </ligand>
</feature>
<feature type="binding site" evidence="2">
    <location>
        <position position="110"/>
    </location>
    <ligand>
        <name>Zn(2+)</name>
        <dbReference type="ChEBI" id="CHEBI:29105"/>
    </ligand>
</feature>
<feature type="binding site" evidence="2">
    <location>
        <position position="112"/>
    </location>
    <ligand>
        <name>Zn(2+)</name>
        <dbReference type="ChEBI" id="CHEBI:29105"/>
    </ligand>
</feature>
<feature type="binding site" evidence="1">
    <location>
        <begin position="113"/>
        <end position="114"/>
    </location>
    <ligand>
        <name>substrate</name>
    </ligand>
</feature>
<feature type="binding site" evidence="2">
    <location>
        <position position="139"/>
    </location>
    <ligand>
        <name>Mg(2+)</name>
        <dbReference type="ChEBI" id="CHEBI:18420"/>
    </ligand>
</feature>
<feature type="site" description="Stabilizes the phosphoryl group" evidence="1">
    <location>
        <position position="63"/>
    </location>
</feature>
<feature type="site" description="Contributes to substrate recognition" evidence="1">
    <location>
        <position position="113"/>
    </location>
</feature>
<feature type="site" description="Stabilizes the phosphoryl group" evidence="1">
    <location>
        <position position="114"/>
    </location>
</feature>
<reference key="1">
    <citation type="journal article" date="2000" name="Nature">
        <title>The genome sequence of the thermoacidophilic scavenger Thermoplasma acidophilum.</title>
        <authorList>
            <person name="Ruepp A."/>
            <person name="Graml W."/>
            <person name="Santos-Martinez M.-L."/>
            <person name="Koretke K.K."/>
            <person name="Volker C."/>
            <person name="Mewes H.-W."/>
            <person name="Frishman D."/>
            <person name="Stocker S."/>
            <person name="Lupas A.N."/>
            <person name="Baumeister W."/>
        </authorList>
    </citation>
    <scope>NUCLEOTIDE SEQUENCE [LARGE SCALE GENOMIC DNA]</scope>
    <source>
        <strain>ATCC 25905 / DSM 1728 / JCM 9062 / NBRC 15155 / AMRC-C165</strain>
    </source>
</reference>
<sequence length="160" mass="18101">METVRIIYVRDNQTLKTVFVDRDGTINRDCPYCHELDDLQIYDDTVGILKHYQGKGYRIIIVTNQSGIGRGYFSMEEFRRFNDGVVNRLLDLGVKVSATYFCPHRPDEGCSCRKPGIGLINEALSDFRVDIGGSLVIGDRDDVDGQLARNLGLPFRIVSH</sequence>
<keyword id="KW-0119">Carbohydrate metabolism</keyword>
<keyword id="KW-0963">Cytoplasm</keyword>
<keyword id="KW-0378">Hydrolase</keyword>
<keyword id="KW-0460">Magnesium</keyword>
<keyword id="KW-0479">Metal-binding</keyword>
<keyword id="KW-1185">Reference proteome</keyword>
<keyword id="KW-0862">Zinc</keyword>
<gene>
    <name type="primary">gmhB</name>
    <name type="ordered locus">Ta0544</name>
</gene>
<name>GMHB_THEAC</name>
<protein>
    <recommendedName>
        <fullName>Probable D-glycero-D-manno-heptose-1,7-bisphosphate 7-phosphatase</fullName>
        <ecNumber>3.1.3.-</ecNumber>
    </recommendedName>
    <alternativeName>
        <fullName>D,D-heptose 1,7-bisphosphate phosphatase</fullName>
        <shortName>HBP phosphatase</shortName>
    </alternativeName>
</protein>
<proteinExistence type="inferred from homology"/>
<organism>
    <name type="scientific">Thermoplasma acidophilum (strain ATCC 25905 / DSM 1728 / JCM 9062 / NBRC 15155 / AMRC-C165)</name>
    <dbReference type="NCBI Taxonomy" id="273075"/>
    <lineage>
        <taxon>Archaea</taxon>
        <taxon>Methanobacteriati</taxon>
        <taxon>Thermoplasmatota</taxon>
        <taxon>Thermoplasmata</taxon>
        <taxon>Thermoplasmatales</taxon>
        <taxon>Thermoplasmataceae</taxon>
        <taxon>Thermoplasma</taxon>
    </lineage>
</organism>
<accession>Q9HKQ2</accession>